<name>NU5M_BALPH</name>
<dbReference type="EC" id="7.1.1.2" evidence="1"/>
<dbReference type="EMBL" id="X61145">
    <property type="protein sequence ID" value="CAA43449.1"/>
    <property type="molecule type" value="Genomic_DNA"/>
</dbReference>
<dbReference type="PIR" id="C58851">
    <property type="entry name" value="C58851"/>
</dbReference>
<dbReference type="RefSeq" id="NP_006899.1">
    <property type="nucleotide sequence ID" value="NC_001321.1"/>
</dbReference>
<dbReference type="SMR" id="P24978"/>
<dbReference type="GeneID" id="807615"/>
<dbReference type="CTD" id="4540"/>
<dbReference type="GO" id="GO:0005743">
    <property type="term" value="C:mitochondrial inner membrane"/>
    <property type="evidence" value="ECO:0000250"/>
    <property type="project" value="UniProtKB"/>
</dbReference>
<dbReference type="GO" id="GO:0008137">
    <property type="term" value="F:NADH dehydrogenase (ubiquinone) activity"/>
    <property type="evidence" value="ECO:0000250"/>
    <property type="project" value="UniProtKB"/>
</dbReference>
<dbReference type="GO" id="GO:0015990">
    <property type="term" value="P:electron transport coupled proton transport"/>
    <property type="evidence" value="ECO:0007669"/>
    <property type="project" value="TreeGrafter"/>
</dbReference>
<dbReference type="GO" id="GO:0006120">
    <property type="term" value="P:mitochondrial electron transport, NADH to ubiquinone"/>
    <property type="evidence" value="ECO:0000250"/>
    <property type="project" value="UniProtKB"/>
</dbReference>
<dbReference type="GO" id="GO:0032981">
    <property type="term" value="P:mitochondrial respiratory chain complex I assembly"/>
    <property type="evidence" value="ECO:0000250"/>
    <property type="project" value="UniProtKB"/>
</dbReference>
<dbReference type="InterPro" id="IPR010934">
    <property type="entry name" value="NADH_DH_su5_C"/>
</dbReference>
<dbReference type="InterPro" id="IPR018393">
    <property type="entry name" value="NADHpl_OxRdtase_5_subgr"/>
</dbReference>
<dbReference type="InterPro" id="IPR001750">
    <property type="entry name" value="ND/Mrp_TM"/>
</dbReference>
<dbReference type="InterPro" id="IPR003945">
    <property type="entry name" value="NU5C-like"/>
</dbReference>
<dbReference type="InterPro" id="IPR001516">
    <property type="entry name" value="Proton_antipo_N"/>
</dbReference>
<dbReference type="NCBIfam" id="TIGR01974">
    <property type="entry name" value="NDH_I_L"/>
    <property type="match status" value="1"/>
</dbReference>
<dbReference type="PANTHER" id="PTHR42829">
    <property type="entry name" value="NADH-UBIQUINONE OXIDOREDUCTASE CHAIN 5"/>
    <property type="match status" value="1"/>
</dbReference>
<dbReference type="PANTHER" id="PTHR42829:SF2">
    <property type="entry name" value="NADH-UBIQUINONE OXIDOREDUCTASE CHAIN 5"/>
    <property type="match status" value="1"/>
</dbReference>
<dbReference type="Pfam" id="PF06455">
    <property type="entry name" value="NADH5_C"/>
    <property type="match status" value="1"/>
</dbReference>
<dbReference type="Pfam" id="PF00361">
    <property type="entry name" value="Proton_antipo_M"/>
    <property type="match status" value="1"/>
</dbReference>
<dbReference type="Pfam" id="PF00662">
    <property type="entry name" value="Proton_antipo_N"/>
    <property type="match status" value="1"/>
</dbReference>
<dbReference type="PRINTS" id="PR01434">
    <property type="entry name" value="NADHDHGNASE5"/>
</dbReference>
<sequence>MNLFTSFTLLTLLILTTPIMMSHTGSHVNNKYQSYVKNIVFCAFITSLVPAMVYLHTNQETLISNWHWITIQTLKLTLSFKMDYFSLMFMPVALFITWSIMEFSMWYMHSDPYINQFFKYLLLFLITMLILVTANNLFQLFIGWEGVGIMSFLLIGWWFGRTDANTAALQAILYNRIGDIGLLASMAWFLSNMNTWDLEQIFMLNQNPLNFPLMGLVLAAAGKSAQFGLHPWLPSAMEGPTPVSALLHSSTMVVAGIFLLVRFYPLMENNKLIQTVTLCLGAITTLFTAICALTQNDIKKIIAFSTSSQLGLMMVTIGLNQPYLAFLHICTHAFFKAMLFLCSGSIIHNLNNEQDIRKMGGLFKALPFTTTALIIGCLALTGMPFLTGFYSKDPIIEAATSSYTNAWALLLTLIATSLTAVYSTRIIFFALLGQPRFPPSTTINENNPLLINPIKRLLVGSIFAGFILSNSIPPMTTPLMTMPLHLKLTALAMTTLGFIIAFEINLDTQNLKHKHPSNSFKFSTLLGYFPTIMHRLPPHLDLLMSQKLATSLLDLTWLETILPKTTALIQLKASTLTSNQQGLIKLYFLSFLITITLSMILFNYPE</sequence>
<gene>
    <name type="primary">MT-ND5</name>
    <name type="synonym">MTND5</name>
    <name type="synonym">NADH5</name>
    <name type="synonym">ND5</name>
</gene>
<evidence type="ECO:0000250" key="1">
    <source>
        <dbReference type="UniProtKB" id="P03915"/>
    </source>
</evidence>
<evidence type="ECO:0000250" key="2">
    <source>
        <dbReference type="UniProtKB" id="P03920"/>
    </source>
</evidence>
<evidence type="ECO:0000255" key="3"/>
<evidence type="ECO:0000305" key="4"/>
<comment type="function">
    <text evidence="1">Core subunit of the mitochondrial membrane respiratory chain NADH dehydrogenase (Complex I) which catalyzes electron transfer from NADH through the respiratory chain, using ubiquinone as an electron acceptor. Essential for the catalytic activity and assembly of complex I.</text>
</comment>
<comment type="catalytic activity">
    <reaction evidence="1">
        <text>a ubiquinone + NADH + 5 H(+)(in) = a ubiquinol + NAD(+) + 4 H(+)(out)</text>
        <dbReference type="Rhea" id="RHEA:29091"/>
        <dbReference type="Rhea" id="RHEA-COMP:9565"/>
        <dbReference type="Rhea" id="RHEA-COMP:9566"/>
        <dbReference type="ChEBI" id="CHEBI:15378"/>
        <dbReference type="ChEBI" id="CHEBI:16389"/>
        <dbReference type="ChEBI" id="CHEBI:17976"/>
        <dbReference type="ChEBI" id="CHEBI:57540"/>
        <dbReference type="ChEBI" id="CHEBI:57945"/>
        <dbReference type="EC" id="7.1.1.2"/>
    </reaction>
</comment>
<comment type="subunit">
    <text evidence="2">Core subunit of respiratory chain NADH dehydrogenase (Complex I) which is composed of 45 different subunits.</text>
</comment>
<comment type="subcellular location">
    <subcellularLocation>
        <location evidence="2">Mitochondrion inner membrane</location>
        <topology evidence="3">Multi-pass membrane protein</topology>
    </subcellularLocation>
</comment>
<comment type="similarity">
    <text evidence="4">Belongs to the complex I subunit 5 family.</text>
</comment>
<proteinExistence type="inferred from homology"/>
<accession>P24978</accession>
<keyword id="KW-0249">Electron transport</keyword>
<keyword id="KW-0472">Membrane</keyword>
<keyword id="KW-0496">Mitochondrion</keyword>
<keyword id="KW-0999">Mitochondrion inner membrane</keyword>
<keyword id="KW-0520">NAD</keyword>
<keyword id="KW-0679">Respiratory chain</keyword>
<keyword id="KW-1278">Translocase</keyword>
<keyword id="KW-0812">Transmembrane</keyword>
<keyword id="KW-1133">Transmembrane helix</keyword>
<keyword id="KW-0813">Transport</keyword>
<keyword id="KW-0830">Ubiquinone</keyword>
<geneLocation type="mitochondrion"/>
<organism>
    <name type="scientific">Balaenoptera physalus</name>
    <name type="common">Fin whale</name>
    <name type="synonym">Balaena physalus</name>
    <dbReference type="NCBI Taxonomy" id="9770"/>
    <lineage>
        <taxon>Eukaryota</taxon>
        <taxon>Metazoa</taxon>
        <taxon>Chordata</taxon>
        <taxon>Craniata</taxon>
        <taxon>Vertebrata</taxon>
        <taxon>Euteleostomi</taxon>
        <taxon>Mammalia</taxon>
        <taxon>Eutheria</taxon>
        <taxon>Laurasiatheria</taxon>
        <taxon>Artiodactyla</taxon>
        <taxon>Whippomorpha</taxon>
        <taxon>Cetacea</taxon>
        <taxon>Mysticeti</taxon>
        <taxon>Balaenopteridae</taxon>
        <taxon>Balaenoptera</taxon>
    </lineage>
</organism>
<reference key="1">
    <citation type="journal article" date="1991" name="J. Mol. Evol.">
        <title>The complete nucleotide sequence of the mitochondrial DNA of the fin whale, Balaenoptera physalus.</title>
        <authorList>
            <person name="Arnason U."/>
            <person name="Gullberg A."/>
            <person name="Widegren B."/>
        </authorList>
    </citation>
    <scope>NUCLEOTIDE SEQUENCE [GENOMIC DNA]</scope>
    <source>
        <strain>Isolate No. 27 / Anno 1987</strain>
        <tissue>Liver</tissue>
    </source>
</reference>
<protein>
    <recommendedName>
        <fullName>NADH-ubiquinone oxidoreductase chain 5</fullName>
        <ecNumber evidence="1">7.1.1.2</ecNumber>
    </recommendedName>
    <alternativeName>
        <fullName>NADH dehydrogenase subunit 5</fullName>
    </alternativeName>
</protein>
<feature type="chain" id="PRO_0000118067" description="NADH-ubiquinone oxidoreductase chain 5">
    <location>
        <begin position="1"/>
        <end position="606"/>
    </location>
</feature>
<feature type="transmembrane region" description="Helical" evidence="3">
    <location>
        <begin position="1"/>
        <end position="21"/>
    </location>
</feature>
<feature type="transmembrane region" description="Helical" evidence="3">
    <location>
        <begin position="35"/>
        <end position="55"/>
    </location>
</feature>
<feature type="transmembrane region" description="Helical" evidence="3">
    <location>
        <begin position="87"/>
        <end position="107"/>
    </location>
</feature>
<feature type="transmembrane region" description="Helical" evidence="3">
    <location>
        <begin position="114"/>
        <end position="134"/>
    </location>
</feature>
<feature type="transmembrane region" description="Helical" evidence="3">
    <location>
        <begin position="140"/>
        <end position="160"/>
    </location>
</feature>
<feature type="transmembrane region" description="Helical" evidence="3">
    <location>
        <begin position="171"/>
        <end position="191"/>
    </location>
</feature>
<feature type="transmembrane region" description="Helical" evidence="3">
    <location>
        <begin position="211"/>
        <end position="233"/>
    </location>
</feature>
<feature type="transmembrane region" description="Helical" evidence="3">
    <location>
        <begin position="241"/>
        <end position="261"/>
    </location>
</feature>
<feature type="transmembrane region" description="Helical" evidence="3">
    <location>
        <begin position="272"/>
        <end position="292"/>
    </location>
</feature>
<feature type="transmembrane region" description="Helical" evidence="3">
    <location>
        <begin position="301"/>
        <end position="320"/>
    </location>
</feature>
<feature type="transmembrane region" description="Helical" evidence="3">
    <location>
        <begin position="325"/>
        <end position="347"/>
    </location>
</feature>
<feature type="transmembrane region" description="Helical" evidence="3">
    <location>
        <begin position="366"/>
        <end position="386"/>
    </location>
</feature>
<feature type="transmembrane region" description="Helical" evidence="3">
    <location>
        <begin position="413"/>
        <end position="433"/>
    </location>
</feature>
<feature type="transmembrane region" description="Helical" evidence="3">
    <location>
        <begin position="457"/>
        <end position="477"/>
    </location>
</feature>
<feature type="transmembrane region" description="Helical" evidence="3">
    <location>
        <begin position="482"/>
        <end position="502"/>
    </location>
</feature>
<feature type="transmembrane region" description="Helical" evidence="3">
    <location>
        <begin position="582"/>
        <end position="602"/>
    </location>
</feature>